<dbReference type="EMBL" id="AF184146">
    <property type="protein sequence ID" value="AAG17006.1"/>
    <property type="status" value="ALT_FRAME"/>
    <property type="molecule type" value="mRNA"/>
</dbReference>
<dbReference type="EMBL" id="AL132960">
    <property type="protein sequence ID" value="CAB88333.1"/>
    <property type="molecule type" value="Genomic_DNA"/>
</dbReference>
<dbReference type="EMBL" id="CP002686">
    <property type="protein sequence ID" value="AEE79130.1"/>
    <property type="molecule type" value="Genomic_DNA"/>
</dbReference>
<dbReference type="EMBL" id="CP002686">
    <property type="protein sequence ID" value="AEE79131.1"/>
    <property type="molecule type" value="Genomic_DNA"/>
</dbReference>
<dbReference type="EMBL" id="CP002686">
    <property type="protein sequence ID" value="ANM64695.1"/>
    <property type="molecule type" value="Genomic_DNA"/>
</dbReference>
<dbReference type="EMBL" id="BT030393">
    <property type="protein sequence ID" value="ABO45696.1"/>
    <property type="molecule type" value="mRNA"/>
</dbReference>
<dbReference type="PIR" id="T45911">
    <property type="entry name" value="T45911"/>
</dbReference>
<dbReference type="RefSeq" id="NP_001030854.1">
    <property type="nucleotide sequence ID" value="NM_001035777.2"/>
</dbReference>
<dbReference type="RefSeq" id="NP_001319740.1">
    <property type="nucleotide sequence ID" value="NM_001339627.1"/>
</dbReference>
<dbReference type="RefSeq" id="NP_190939.1">
    <property type="nucleotide sequence ID" value="NM_115231.4"/>
</dbReference>
<dbReference type="SMR" id="Q9M354"/>
<dbReference type="BioGRID" id="9855">
    <property type="interactions" value="3"/>
</dbReference>
<dbReference type="FunCoup" id="Q9M354">
    <property type="interactions" value="4342"/>
</dbReference>
<dbReference type="IntAct" id="Q9M354">
    <property type="interactions" value="3"/>
</dbReference>
<dbReference type="STRING" id="3702.Q9M354"/>
<dbReference type="iPTMnet" id="Q9M354"/>
<dbReference type="PaxDb" id="3702-AT3G53710.1"/>
<dbReference type="ProteomicsDB" id="244878"/>
<dbReference type="EnsemblPlants" id="AT3G53710.1">
    <property type="protein sequence ID" value="AT3G53710.1"/>
    <property type="gene ID" value="AT3G53710"/>
</dbReference>
<dbReference type="EnsemblPlants" id="AT3G53710.2">
    <property type="protein sequence ID" value="AT3G53710.2"/>
    <property type="gene ID" value="AT3G53710"/>
</dbReference>
<dbReference type="EnsemblPlants" id="AT3G53710.3">
    <property type="protein sequence ID" value="AT3G53710.3"/>
    <property type="gene ID" value="AT3G53710"/>
</dbReference>
<dbReference type="GeneID" id="824538"/>
<dbReference type="Gramene" id="AT3G53710.1">
    <property type="protein sequence ID" value="AT3G53710.1"/>
    <property type="gene ID" value="AT3G53710"/>
</dbReference>
<dbReference type="Gramene" id="AT3G53710.2">
    <property type="protein sequence ID" value="AT3G53710.2"/>
    <property type="gene ID" value="AT3G53710"/>
</dbReference>
<dbReference type="Gramene" id="AT3G53710.3">
    <property type="protein sequence ID" value="AT3G53710.3"/>
    <property type="gene ID" value="AT3G53710"/>
</dbReference>
<dbReference type="KEGG" id="ath:AT3G53710"/>
<dbReference type="Araport" id="AT3G53710"/>
<dbReference type="TAIR" id="AT3G53710">
    <property type="gene designation" value="AGD6"/>
</dbReference>
<dbReference type="eggNOG" id="KOG0704">
    <property type="taxonomic scope" value="Eukaryota"/>
</dbReference>
<dbReference type="HOGENOM" id="CLU_044516_1_0_1"/>
<dbReference type="InParanoid" id="Q9M354"/>
<dbReference type="OMA" id="AWDLLMN"/>
<dbReference type="PhylomeDB" id="Q9M354"/>
<dbReference type="PRO" id="PR:Q9M354"/>
<dbReference type="Proteomes" id="UP000006548">
    <property type="component" value="Chromosome 3"/>
</dbReference>
<dbReference type="ExpressionAtlas" id="Q9M354">
    <property type="expression patterns" value="baseline and differential"/>
</dbReference>
<dbReference type="GO" id="GO:0005829">
    <property type="term" value="C:cytosol"/>
    <property type="evidence" value="ECO:0007005"/>
    <property type="project" value="TAIR"/>
</dbReference>
<dbReference type="GO" id="GO:0005096">
    <property type="term" value="F:GTPase activator activity"/>
    <property type="evidence" value="ECO:0007669"/>
    <property type="project" value="UniProtKB-KW"/>
</dbReference>
<dbReference type="GO" id="GO:0008270">
    <property type="term" value="F:zinc ion binding"/>
    <property type="evidence" value="ECO:0007669"/>
    <property type="project" value="UniProtKB-KW"/>
</dbReference>
<dbReference type="GO" id="GO:0016192">
    <property type="term" value="P:vesicle-mediated transport"/>
    <property type="evidence" value="ECO:0007669"/>
    <property type="project" value="InterPro"/>
</dbReference>
<dbReference type="CDD" id="cd08830">
    <property type="entry name" value="ArfGap_ArfGap1"/>
    <property type="match status" value="1"/>
</dbReference>
<dbReference type="FunFam" id="1.10.220.150:FF:000014">
    <property type="entry name" value="ADP-ribosylation factor GTPase-activating protein"/>
    <property type="match status" value="1"/>
</dbReference>
<dbReference type="Gene3D" id="1.10.220.150">
    <property type="entry name" value="Arf GTPase activating protein"/>
    <property type="match status" value="1"/>
</dbReference>
<dbReference type="InterPro" id="IPR044519">
    <property type="entry name" value="ARF_GAP_AGD6/7"/>
</dbReference>
<dbReference type="InterPro" id="IPR037278">
    <property type="entry name" value="ARFGAP/RecO"/>
</dbReference>
<dbReference type="InterPro" id="IPR001164">
    <property type="entry name" value="ArfGAP_dom"/>
</dbReference>
<dbReference type="InterPro" id="IPR038508">
    <property type="entry name" value="ArfGAP_dom_sf"/>
</dbReference>
<dbReference type="PANTHER" id="PTHR47021">
    <property type="entry name" value="ADP-RIBOSYLATION FACTOR GTPASE-ACTIVATING PROTEIN AGD6-RELATED"/>
    <property type="match status" value="1"/>
</dbReference>
<dbReference type="PANTHER" id="PTHR47021:SF4">
    <property type="entry name" value="ADP-RIBOSYLATION FACTOR GTPASE-ACTIVATING PROTEIN AGD6-RELATED"/>
    <property type="match status" value="1"/>
</dbReference>
<dbReference type="Pfam" id="PF01412">
    <property type="entry name" value="ArfGap"/>
    <property type="match status" value="1"/>
</dbReference>
<dbReference type="PRINTS" id="PR00405">
    <property type="entry name" value="REVINTRACTNG"/>
</dbReference>
<dbReference type="SMART" id="SM00105">
    <property type="entry name" value="ArfGap"/>
    <property type="match status" value="1"/>
</dbReference>
<dbReference type="SUPFAM" id="SSF57863">
    <property type="entry name" value="ArfGap/RecO-like zinc finger"/>
    <property type="match status" value="1"/>
</dbReference>
<dbReference type="PROSITE" id="PS50115">
    <property type="entry name" value="ARFGAP"/>
    <property type="match status" value="1"/>
</dbReference>
<protein>
    <recommendedName>
        <fullName>Probable ADP-ribosylation factor GTPase-activating protein AGD6</fullName>
        <shortName>ARF GAP AGD6</shortName>
    </recommendedName>
    <alternativeName>
        <fullName>Protein ARF-GAP DOMAIN 6</fullName>
        <shortName>AtAGD6</shortName>
    </alternativeName>
    <alternativeName>
        <fullName>Protein ZIGA2</fullName>
    </alternativeName>
</protein>
<reference key="1">
    <citation type="journal article" date="2000" name="Plant Mol. Biol.">
        <title>Promiscuous and specific phospholipid binding by domains in ZAC, a membrane-associated Arabidopsis protein with an ARF GAP zinc finger and a C2 domain.</title>
        <authorList>
            <person name="Jensen R.B."/>
            <person name="Lykke-Andersen K."/>
            <person name="Frandsen G.I."/>
            <person name="Nielsen H.B."/>
            <person name="Haseloff J."/>
            <person name="Jespersen H.M."/>
            <person name="Mundy J."/>
            <person name="Skriver K."/>
        </authorList>
    </citation>
    <scope>NUCLEOTIDE SEQUENCE [MRNA]</scope>
    <source>
        <strain>cv. Columbia</strain>
    </source>
</reference>
<reference key="2">
    <citation type="journal article" date="2000" name="Nature">
        <title>Sequence and analysis of chromosome 3 of the plant Arabidopsis thaliana.</title>
        <authorList>
            <person name="Salanoubat M."/>
            <person name="Lemcke K."/>
            <person name="Rieger M."/>
            <person name="Ansorge W."/>
            <person name="Unseld M."/>
            <person name="Fartmann B."/>
            <person name="Valle G."/>
            <person name="Bloecker H."/>
            <person name="Perez-Alonso M."/>
            <person name="Obermaier B."/>
            <person name="Delseny M."/>
            <person name="Boutry M."/>
            <person name="Grivell L.A."/>
            <person name="Mache R."/>
            <person name="Puigdomenech P."/>
            <person name="De Simone V."/>
            <person name="Choisne N."/>
            <person name="Artiguenave F."/>
            <person name="Robert C."/>
            <person name="Brottier P."/>
            <person name="Wincker P."/>
            <person name="Cattolico L."/>
            <person name="Weissenbach J."/>
            <person name="Saurin W."/>
            <person name="Quetier F."/>
            <person name="Schaefer M."/>
            <person name="Mueller-Auer S."/>
            <person name="Gabel C."/>
            <person name="Fuchs M."/>
            <person name="Benes V."/>
            <person name="Wurmbach E."/>
            <person name="Drzonek H."/>
            <person name="Erfle H."/>
            <person name="Jordan N."/>
            <person name="Bangert S."/>
            <person name="Wiedelmann R."/>
            <person name="Kranz H."/>
            <person name="Voss H."/>
            <person name="Holland R."/>
            <person name="Brandt P."/>
            <person name="Nyakatura G."/>
            <person name="Vezzi A."/>
            <person name="D'Angelo M."/>
            <person name="Pallavicini A."/>
            <person name="Toppo S."/>
            <person name="Simionati B."/>
            <person name="Conrad A."/>
            <person name="Hornischer K."/>
            <person name="Kauer G."/>
            <person name="Loehnert T.-H."/>
            <person name="Nordsiek G."/>
            <person name="Reichelt J."/>
            <person name="Scharfe M."/>
            <person name="Schoen O."/>
            <person name="Bargues M."/>
            <person name="Terol J."/>
            <person name="Climent J."/>
            <person name="Navarro P."/>
            <person name="Collado C."/>
            <person name="Perez-Perez A."/>
            <person name="Ottenwaelder B."/>
            <person name="Duchemin D."/>
            <person name="Cooke R."/>
            <person name="Laudie M."/>
            <person name="Berger-Llauro C."/>
            <person name="Purnelle B."/>
            <person name="Masuy D."/>
            <person name="de Haan M."/>
            <person name="Maarse A.C."/>
            <person name="Alcaraz J.-P."/>
            <person name="Cottet A."/>
            <person name="Casacuberta E."/>
            <person name="Monfort A."/>
            <person name="Argiriou A."/>
            <person name="Flores M."/>
            <person name="Liguori R."/>
            <person name="Vitale D."/>
            <person name="Mannhaupt G."/>
            <person name="Haase D."/>
            <person name="Schoof H."/>
            <person name="Rudd S."/>
            <person name="Zaccaria P."/>
            <person name="Mewes H.-W."/>
            <person name="Mayer K.F.X."/>
            <person name="Kaul S."/>
            <person name="Town C.D."/>
            <person name="Koo H.L."/>
            <person name="Tallon L.J."/>
            <person name="Jenkins J."/>
            <person name="Rooney T."/>
            <person name="Rizzo M."/>
            <person name="Walts A."/>
            <person name="Utterback T."/>
            <person name="Fujii C.Y."/>
            <person name="Shea T.P."/>
            <person name="Creasy T.H."/>
            <person name="Haas B."/>
            <person name="Maiti R."/>
            <person name="Wu D."/>
            <person name="Peterson J."/>
            <person name="Van Aken S."/>
            <person name="Pai G."/>
            <person name="Militscher J."/>
            <person name="Sellers P."/>
            <person name="Gill J.E."/>
            <person name="Feldblyum T.V."/>
            <person name="Preuss D."/>
            <person name="Lin X."/>
            <person name="Nierman W.C."/>
            <person name="Salzberg S.L."/>
            <person name="White O."/>
            <person name="Venter J.C."/>
            <person name="Fraser C.M."/>
            <person name="Kaneko T."/>
            <person name="Nakamura Y."/>
            <person name="Sato S."/>
            <person name="Kato T."/>
            <person name="Asamizu E."/>
            <person name="Sasamoto S."/>
            <person name="Kimura T."/>
            <person name="Idesawa K."/>
            <person name="Kawashima K."/>
            <person name="Kishida Y."/>
            <person name="Kiyokawa C."/>
            <person name="Kohara M."/>
            <person name="Matsumoto M."/>
            <person name="Matsuno A."/>
            <person name="Muraki A."/>
            <person name="Nakayama S."/>
            <person name="Nakazaki N."/>
            <person name="Shinpo S."/>
            <person name="Takeuchi C."/>
            <person name="Wada T."/>
            <person name="Watanabe A."/>
            <person name="Yamada M."/>
            <person name="Yasuda M."/>
            <person name="Tabata S."/>
        </authorList>
    </citation>
    <scope>NUCLEOTIDE SEQUENCE [LARGE SCALE GENOMIC DNA]</scope>
    <source>
        <strain>cv. Columbia</strain>
    </source>
</reference>
<reference key="3">
    <citation type="journal article" date="2017" name="Plant J.">
        <title>Araport11: a complete reannotation of the Arabidopsis thaliana reference genome.</title>
        <authorList>
            <person name="Cheng C.Y."/>
            <person name="Krishnakumar V."/>
            <person name="Chan A.P."/>
            <person name="Thibaud-Nissen F."/>
            <person name="Schobel S."/>
            <person name="Town C.D."/>
        </authorList>
    </citation>
    <scope>GENOME REANNOTATION</scope>
    <source>
        <strain>cv. Columbia</strain>
    </source>
</reference>
<reference key="4">
    <citation type="submission" date="2007-03" db="EMBL/GenBank/DDBJ databases">
        <title>Arabidopsis ORF clones.</title>
        <authorList>
            <person name="Kim C.J."/>
            <person name="Bautista V.R."/>
            <person name="Chen H."/>
            <person name="De Los Reyes C."/>
            <person name="Wu S.Y."/>
            <person name="Ecker J.R."/>
        </authorList>
    </citation>
    <scope>NUCLEOTIDE SEQUENCE [LARGE SCALE MRNA]</scope>
    <source>
        <strain>cv. Columbia</strain>
    </source>
</reference>
<reference key="5">
    <citation type="journal article" date="2003" name="Plant Physiol.">
        <title>Analysis of the small GTPase gene superfamily of Arabidopsis.</title>
        <authorList>
            <person name="Vernoud V."/>
            <person name="Horton A.C."/>
            <person name="Yang Z."/>
            <person name="Nielsen E."/>
        </authorList>
    </citation>
    <scope>GENE FAMILY</scope>
    <scope>NOMENCLATURE</scope>
</reference>
<reference key="6">
    <citation type="journal article" date="2008" name="J. Proteome Res.">
        <title>Site-specific phosphorylation profiling of Arabidopsis proteins by mass spectrometry and peptide chip analysis.</title>
        <authorList>
            <person name="de la Fuente van Bentem S."/>
            <person name="Anrather D."/>
            <person name="Dohnal I."/>
            <person name="Roitinger E."/>
            <person name="Csaszar E."/>
            <person name="Joore J."/>
            <person name="Buijnink J."/>
            <person name="Carreri A."/>
            <person name="Forzani C."/>
            <person name="Lorkovic Z.J."/>
            <person name="Barta A."/>
            <person name="Lecourieux D."/>
            <person name="Verhounig A."/>
            <person name="Jonak C."/>
            <person name="Hirt H."/>
        </authorList>
    </citation>
    <scope>PHOSPHORYLATION [LARGE SCALE ANALYSIS] AT SER-188</scope>
    <scope>IDENTIFICATION BY MASS SPECTROMETRY [LARGE SCALE ANALYSIS]</scope>
    <source>
        <tissue>Root</tissue>
    </source>
</reference>
<reference key="7">
    <citation type="journal article" date="2009" name="Plant Physiol.">
        <title>Large-scale Arabidopsis phosphoproteome profiling reveals novel chloroplast kinase substrates and phosphorylation networks.</title>
        <authorList>
            <person name="Reiland S."/>
            <person name="Messerli G."/>
            <person name="Baerenfaller K."/>
            <person name="Gerrits B."/>
            <person name="Endler A."/>
            <person name="Grossmann J."/>
            <person name="Gruissem W."/>
            <person name="Baginsky S."/>
        </authorList>
    </citation>
    <scope>PHOSPHORYLATION [LARGE SCALE ANALYSIS] AT SER-169</scope>
    <scope>IDENTIFICATION BY MASS SPECTROMETRY [LARGE SCALE ANALYSIS]</scope>
</reference>
<gene>
    <name type="primary">AGD6</name>
    <name type="synonym">ZIG2</name>
    <name type="synonym">ZIGA2</name>
    <name type="ordered locus">At3g53710</name>
    <name type="ORF">F5K20.10</name>
</gene>
<name>AGD6_ARATH</name>
<keyword id="KW-0343">GTPase activation</keyword>
<keyword id="KW-0479">Metal-binding</keyword>
<keyword id="KW-0597">Phosphoprotein</keyword>
<keyword id="KW-1185">Reference proteome</keyword>
<keyword id="KW-0862">Zinc</keyword>
<keyword id="KW-0863">Zinc-finger</keyword>
<evidence type="ECO:0000250" key="1"/>
<evidence type="ECO:0000255" key="2">
    <source>
        <dbReference type="PROSITE-ProRule" id="PRU00288"/>
    </source>
</evidence>
<evidence type="ECO:0000256" key="3">
    <source>
        <dbReference type="SAM" id="MobiDB-lite"/>
    </source>
</evidence>
<evidence type="ECO:0000305" key="4"/>
<evidence type="ECO:0007744" key="5">
    <source>
    </source>
</evidence>
<evidence type="ECO:0007744" key="6">
    <source>
    </source>
</evidence>
<feature type="chain" id="PRO_0000352498" description="Probable ADP-ribosylation factor GTPase-activating protein AGD6">
    <location>
        <begin position="1"/>
        <end position="459"/>
    </location>
</feature>
<feature type="domain" description="Arf-GAP" evidence="2">
    <location>
        <begin position="4"/>
        <end position="120"/>
    </location>
</feature>
<feature type="zinc finger region" description="C4-type" evidence="2">
    <location>
        <begin position="19"/>
        <end position="42"/>
    </location>
</feature>
<feature type="region of interest" description="Disordered" evidence="3">
    <location>
        <begin position="118"/>
        <end position="195"/>
    </location>
</feature>
<feature type="region of interest" description="Disordered" evidence="3">
    <location>
        <begin position="214"/>
        <end position="248"/>
    </location>
</feature>
<feature type="region of interest" description="Disordered" evidence="3">
    <location>
        <begin position="333"/>
        <end position="459"/>
    </location>
</feature>
<feature type="compositionally biased region" description="Low complexity" evidence="3">
    <location>
        <begin position="142"/>
        <end position="153"/>
    </location>
</feature>
<feature type="compositionally biased region" description="Basic and acidic residues" evidence="3">
    <location>
        <begin position="180"/>
        <end position="193"/>
    </location>
</feature>
<feature type="compositionally biased region" description="Polar residues" evidence="3">
    <location>
        <begin position="335"/>
        <end position="344"/>
    </location>
</feature>
<feature type="compositionally biased region" description="Low complexity" evidence="3">
    <location>
        <begin position="345"/>
        <end position="359"/>
    </location>
</feature>
<feature type="compositionally biased region" description="Polar residues" evidence="3">
    <location>
        <begin position="360"/>
        <end position="380"/>
    </location>
</feature>
<feature type="compositionally biased region" description="Low complexity" evidence="3">
    <location>
        <begin position="381"/>
        <end position="392"/>
    </location>
</feature>
<feature type="compositionally biased region" description="Basic and acidic residues" evidence="3">
    <location>
        <begin position="420"/>
        <end position="431"/>
    </location>
</feature>
<feature type="modified residue" description="Phosphoserine" evidence="6">
    <location>
        <position position="169"/>
    </location>
</feature>
<feature type="modified residue" description="Phosphoserine" evidence="5">
    <location>
        <position position="188"/>
    </location>
</feature>
<feature type="sequence conflict" description="In Ref. 1; AAG17006." evidence="4" ref="1">
    <original>T</original>
    <variation>I</variation>
    <location>
        <position position="307"/>
    </location>
</feature>
<accession>Q9M354</accession>
<accession>Q9FVH2</accession>
<organism>
    <name type="scientific">Arabidopsis thaliana</name>
    <name type="common">Mouse-ear cress</name>
    <dbReference type="NCBI Taxonomy" id="3702"/>
    <lineage>
        <taxon>Eukaryota</taxon>
        <taxon>Viridiplantae</taxon>
        <taxon>Streptophyta</taxon>
        <taxon>Embryophyta</taxon>
        <taxon>Tracheophyta</taxon>
        <taxon>Spermatophyta</taxon>
        <taxon>Magnoliopsida</taxon>
        <taxon>eudicotyledons</taxon>
        <taxon>Gunneridae</taxon>
        <taxon>Pentapetalae</taxon>
        <taxon>rosids</taxon>
        <taxon>malvids</taxon>
        <taxon>Brassicales</taxon>
        <taxon>Brassicaceae</taxon>
        <taxon>Camelineae</taxon>
        <taxon>Arabidopsis</taxon>
    </lineage>
</organism>
<comment type="function">
    <text evidence="1">GTPase-activating protein (GAP) for ADP ribosylation factor (ARF).</text>
</comment>
<comment type="interaction">
    <interactant intactId="EBI-21138098">
        <id>Q9M354</id>
    </interactant>
    <interactant intactId="EBI-2010961">
        <id>Q9LIC6</id>
        <label>PRA1F3</label>
    </interactant>
    <organismsDiffer>false</organismsDiffer>
    <experiments>3</experiments>
</comment>
<comment type="sequence caution" evidence="4">
    <conflict type="frameshift">
        <sequence resource="EMBL-CDS" id="AAG17006"/>
    </conflict>
</comment>
<proteinExistence type="evidence at protein level"/>
<sequence length="459" mass="49724">MAATRQLRTLQSQPENKVCVDCAQKNPQWASVSYGIFMCLECSGKHRGLGVHISFVRSVTMDSWSAIQIKKMEAGGNERLNKFFAQYGIAKETDIISKYNSNAASVYRDRIQALAEGRPWNDPPVVKEANKKPPLAQGGYGNNNNNNNGGWDSWDNDDSYKSDMRRNQSANDFRASGNREGAHVKSKSSEDIYTRSQLEASAAGKESFFARRMAENESKPEGLPPSQGGKYVGFGSSSAPPPRNNQQDDVFSVVSQGFGRLSLVAASAAQSAASVVQTGTKEFTSKVKEGGYDHKVSETVNVVANKTTEIGHRTWGIMKGVMAMATQKVEEFTKEGSTSWNQQSENEGNGYYQNFGNGNKAANSSVGGGRPQSSSTSGHYNNSQNSNSWDSWGENENKKTEAVAPKGSSASNDDDGWTGWDDHDAKDDGFDGHYQSAGDKKSAGHNGKSDTAWTGGGFL</sequence>